<organism>
    <name type="scientific">Campylobacter fetus subsp. fetus (strain 82-40)</name>
    <dbReference type="NCBI Taxonomy" id="360106"/>
    <lineage>
        <taxon>Bacteria</taxon>
        <taxon>Pseudomonadati</taxon>
        <taxon>Campylobacterota</taxon>
        <taxon>Epsilonproteobacteria</taxon>
        <taxon>Campylobacterales</taxon>
        <taxon>Campylobacteraceae</taxon>
        <taxon>Campylobacter</taxon>
    </lineage>
</organism>
<gene>
    <name evidence="1" type="primary">mnmC</name>
    <name type="ordered locus">CFF8240_1208</name>
</gene>
<feature type="chain" id="PRO_0000347968" description="tRNA 5-methylaminomethyl-2-thiouridine biosynthesis bifunctional protein MnmC">
    <location>
        <begin position="1"/>
        <end position="612"/>
    </location>
</feature>
<feature type="region of interest" description="tRNA (mnm(5)s(2)U34)-methyltransferase">
    <location>
        <begin position="1"/>
        <end position="218"/>
    </location>
</feature>
<feature type="region of interest" description="FAD-dependent cmnm(5)s(2)U34 oxidoreductase">
    <location>
        <begin position="244"/>
        <end position="612"/>
    </location>
</feature>
<sequence>MITFRGDGLYNSKFDDIYFNTNEPLIECEHTYSSVLDEINAKFIVVAEAGFGTGLNFFSTVLKFLSLNSTELHYIAVEKYPFKKSELREIYLKFEILKPFFDEFIEQYEILDGALIRIKLLNERVILDLYFGDILDAFDELSFRADAWYLDGFSPTKNPDMWSKEVFDRLSKFCKNRAKVRTFSSAKIVQNRFLEHGFSIKKLKGHYKKREILEASLEHSSPKILKEPWYALPNISKFSDVLIIGAGVAGLAAAFKFKKAGFNVCIAEKMSEAATNGSSNLAGILMPLITKPKVALGNMHMSAFLFARHFYANSPFADFCGVYDYGVNDLEKTRLSLWDSEIFKFENDFEPYPRAFIKSAAQIRPKELCMSLASEFDIKYGYEFESIEKSTGGYVVKFKNSKNIFSSLVIFAMGDVSTNLFQNVFADEFMQLSSVRGQVTHLNKVLNLNSAFSARGYMCKDVRGIQVVGATYDRNDNRSAARATDDEKNIDSLSEFITNLDVKVVGSNVGFRGYSGDRFPIVGAVHNASEFKKIYKSLLWTKHSKNNEFAVHHENILISSAHGSRGLGTAIFGAEILLDIALNRPVCTTNSILNSLNPARFLVRKLKRGLVR</sequence>
<evidence type="ECO:0000255" key="1">
    <source>
        <dbReference type="HAMAP-Rule" id="MF_01102"/>
    </source>
</evidence>
<dbReference type="EC" id="2.1.1.61" evidence="1"/>
<dbReference type="EC" id="1.5.-.-" evidence="1"/>
<dbReference type="EMBL" id="CP000487">
    <property type="protein sequence ID" value="ABK82863.1"/>
    <property type="molecule type" value="Genomic_DNA"/>
</dbReference>
<dbReference type="RefSeq" id="WP_011732120.1">
    <property type="nucleotide sequence ID" value="NC_008599.1"/>
</dbReference>
<dbReference type="SMR" id="A0RQ83"/>
<dbReference type="GeneID" id="61065033"/>
<dbReference type="KEGG" id="cff:CFF8240_1208"/>
<dbReference type="PATRIC" id="fig|360106.6.peg.1181"/>
<dbReference type="eggNOG" id="COG0665">
    <property type="taxonomic scope" value="Bacteria"/>
</dbReference>
<dbReference type="eggNOG" id="COG4121">
    <property type="taxonomic scope" value="Bacteria"/>
</dbReference>
<dbReference type="HOGENOM" id="CLU_022427_2_1_7"/>
<dbReference type="Proteomes" id="UP000000760">
    <property type="component" value="Chromosome"/>
</dbReference>
<dbReference type="GO" id="GO:0005737">
    <property type="term" value="C:cytoplasm"/>
    <property type="evidence" value="ECO:0007669"/>
    <property type="project" value="UniProtKB-SubCell"/>
</dbReference>
<dbReference type="GO" id="GO:0016645">
    <property type="term" value="F:oxidoreductase activity, acting on the CH-NH group of donors"/>
    <property type="evidence" value="ECO:0007669"/>
    <property type="project" value="InterPro"/>
</dbReference>
<dbReference type="GO" id="GO:0004808">
    <property type="term" value="F:tRNA (5-methylaminomethyl-2-thiouridylate)(34)-methyltransferase activity"/>
    <property type="evidence" value="ECO:0007669"/>
    <property type="project" value="UniProtKB-EC"/>
</dbReference>
<dbReference type="GO" id="GO:0032259">
    <property type="term" value="P:methylation"/>
    <property type="evidence" value="ECO:0007669"/>
    <property type="project" value="UniProtKB-KW"/>
</dbReference>
<dbReference type="GO" id="GO:0008033">
    <property type="term" value="P:tRNA processing"/>
    <property type="evidence" value="ECO:0007669"/>
    <property type="project" value="UniProtKB-KW"/>
</dbReference>
<dbReference type="Gene3D" id="3.30.9.10">
    <property type="entry name" value="D-Amino Acid Oxidase, subunit A, domain 2"/>
    <property type="match status" value="1"/>
</dbReference>
<dbReference type="Gene3D" id="3.50.50.60">
    <property type="entry name" value="FAD/NAD(P)-binding domain"/>
    <property type="match status" value="1"/>
</dbReference>
<dbReference type="Gene3D" id="3.40.50.150">
    <property type="entry name" value="Vaccinia Virus protein VP39"/>
    <property type="match status" value="1"/>
</dbReference>
<dbReference type="HAMAP" id="MF_01102">
    <property type="entry name" value="MnmC"/>
    <property type="match status" value="1"/>
</dbReference>
<dbReference type="InterPro" id="IPR006076">
    <property type="entry name" value="FAD-dep_OxRdtase"/>
</dbReference>
<dbReference type="InterPro" id="IPR036188">
    <property type="entry name" value="FAD/NAD-bd_sf"/>
</dbReference>
<dbReference type="InterPro" id="IPR008471">
    <property type="entry name" value="MnmC-like_methylTransf"/>
</dbReference>
<dbReference type="InterPro" id="IPR029063">
    <property type="entry name" value="SAM-dependent_MTases_sf"/>
</dbReference>
<dbReference type="InterPro" id="IPR023032">
    <property type="entry name" value="tRNA_MAMT_biosynth_bifunc_MnmC"/>
</dbReference>
<dbReference type="InterPro" id="IPR047785">
    <property type="entry name" value="tRNA_MNMC2"/>
</dbReference>
<dbReference type="InterPro" id="IPR017610">
    <property type="entry name" value="tRNA_S-uridine_synth_MnmC_C"/>
</dbReference>
<dbReference type="NCBIfam" id="TIGR03197">
    <property type="entry name" value="MnmC_Cterm"/>
    <property type="match status" value="1"/>
</dbReference>
<dbReference type="NCBIfam" id="NF002481">
    <property type="entry name" value="PRK01747.1-2"/>
    <property type="match status" value="1"/>
</dbReference>
<dbReference type="NCBIfam" id="NF033855">
    <property type="entry name" value="tRNA_MNMC2"/>
    <property type="match status" value="1"/>
</dbReference>
<dbReference type="PANTHER" id="PTHR13847">
    <property type="entry name" value="SARCOSINE DEHYDROGENASE-RELATED"/>
    <property type="match status" value="1"/>
</dbReference>
<dbReference type="PANTHER" id="PTHR13847:SF283">
    <property type="entry name" value="TRNA 5-METHYLAMINOMETHYL-2-THIOURIDINE BIOSYNTHESIS BIFUNCTIONAL PROTEIN MNMC"/>
    <property type="match status" value="1"/>
</dbReference>
<dbReference type="Pfam" id="PF01266">
    <property type="entry name" value="DAO"/>
    <property type="match status" value="1"/>
</dbReference>
<dbReference type="Pfam" id="PF05430">
    <property type="entry name" value="Methyltransf_30"/>
    <property type="match status" value="1"/>
</dbReference>
<dbReference type="SUPFAM" id="SSF51905">
    <property type="entry name" value="FAD/NAD(P)-binding domain"/>
    <property type="match status" value="1"/>
</dbReference>
<proteinExistence type="inferred from homology"/>
<reference key="1">
    <citation type="submission" date="2006-11" db="EMBL/GenBank/DDBJ databases">
        <title>Sequence of Campylobacter fetus subsp. fetus 82-40.</title>
        <authorList>
            <person name="Fouts D.E."/>
            <person name="Nelson K.E."/>
        </authorList>
    </citation>
    <scope>NUCLEOTIDE SEQUENCE [LARGE SCALE GENOMIC DNA]</scope>
    <source>
        <strain>82-40</strain>
    </source>
</reference>
<accession>A0RQ83</accession>
<protein>
    <recommendedName>
        <fullName evidence="1">tRNA 5-methylaminomethyl-2-thiouridine biosynthesis bifunctional protein MnmC</fullName>
        <shortName evidence="1">tRNA mnm(5)s(2)U biosynthesis bifunctional protein</shortName>
    </recommendedName>
    <domain>
        <recommendedName>
            <fullName evidence="1">tRNA (mnm(5)s(2)U34)-methyltransferase</fullName>
            <ecNumber evidence="1">2.1.1.61</ecNumber>
        </recommendedName>
    </domain>
    <domain>
        <recommendedName>
            <fullName evidence="1">FAD-dependent cmnm(5)s(2)U34 oxidoreductase</fullName>
            <ecNumber evidence="1">1.5.-.-</ecNumber>
        </recommendedName>
    </domain>
</protein>
<comment type="function">
    <text evidence="1">Catalyzes the last two steps in the biosynthesis of 5-methylaminomethyl-2-thiouridine (mnm(5)s(2)U) at the wobble position (U34) in tRNA. Catalyzes the FAD-dependent demodification of cmnm(5)s(2)U34 to nm(5)s(2)U34, followed by the transfer of a methyl group from S-adenosyl-L-methionine to nm(5)s(2)U34, to form mnm(5)s(2)U34.</text>
</comment>
<comment type="catalytic activity">
    <reaction evidence="1">
        <text>5-aminomethyl-2-thiouridine(34) in tRNA + S-adenosyl-L-methionine = 5-methylaminomethyl-2-thiouridine(34) in tRNA + S-adenosyl-L-homocysteine + H(+)</text>
        <dbReference type="Rhea" id="RHEA:19569"/>
        <dbReference type="Rhea" id="RHEA-COMP:10195"/>
        <dbReference type="Rhea" id="RHEA-COMP:10197"/>
        <dbReference type="ChEBI" id="CHEBI:15378"/>
        <dbReference type="ChEBI" id="CHEBI:57856"/>
        <dbReference type="ChEBI" id="CHEBI:59789"/>
        <dbReference type="ChEBI" id="CHEBI:74454"/>
        <dbReference type="ChEBI" id="CHEBI:74455"/>
        <dbReference type="EC" id="2.1.1.61"/>
    </reaction>
</comment>
<comment type="cofactor">
    <cofactor evidence="1">
        <name>FAD</name>
        <dbReference type="ChEBI" id="CHEBI:57692"/>
    </cofactor>
</comment>
<comment type="subcellular location">
    <subcellularLocation>
        <location evidence="1">Cytoplasm</location>
    </subcellularLocation>
</comment>
<comment type="similarity">
    <text evidence="1">In the N-terminal section; belongs to the methyltransferase superfamily. tRNA (mnm(5)s(2)U34)-methyltransferase family.</text>
</comment>
<comment type="similarity">
    <text evidence="1">In the C-terminal section; belongs to the DAO family.</text>
</comment>
<name>MNMC_CAMFF</name>
<keyword id="KW-0963">Cytoplasm</keyword>
<keyword id="KW-0274">FAD</keyword>
<keyword id="KW-0285">Flavoprotein</keyword>
<keyword id="KW-0489">Methyltransferase</keyword>
<keyword id="KW-0511">Multifunctional enzyme</keyword>
<keyword id="KW-0560">Oxidoreductase</keyword>
<keyword id="KW-0949">S-adenosyl-L-methionine</keyword>
<keyword id="KW-0808">Transferase</keyword>
<keyword id="KW-0819">tRNA processing</keyword>